<name>EMIL2_MOUSE</name>
<sequence length="1074" mass="117310">MCQETPPRPRAPSRWTPALLALLALGGAGLCHASSQPGYHARPSARNKNWCAYIVNKNVSCTVQEGSESFIQAQYNCPWNQMPCPSALVYRVNFRPRFVTRYKIVTQLEWRCCPGFRGPDCQEGPKDHMKTPRPPSARPKNNLKKATDTDPSQVSQPKKTLSPTNAVEPGQVADAKQGPPELQQSKVQVLEEKVVRLTRMVLDLQSTVVGLKENLKHTIQDDGRKEPDSWLGPLHPQPTPDSPLAGDAEPSQLPGIPSSKESGMKDIKSELAEVKDTLKTKSDKLEELDGKVKGYEGQLKQLQEAAQGPTVTMTTNELYQAYVDSKIDALREELMEGMDRKLADLKNTCEYKLVGLQQQCDDYGSSYLGVIELIGEKEASLKKDIADLRAQLQDPVAQPSCCNGQKSSDFGPQIKALDQKIERVAEATRMLNGRLDNEFDRLSVPEPDADFDARWTELDARINVTEKNAEEHCFYIEETLRGTINGEVDDLRKLLNEKIHSLEDRLGIVLQAANSSDVELTPMGPALPEQPGAENEQVLMELSRLKDKVQVVEDFCLQSLPHGIDGALPSVEDLTHVSLSLLESLNDTMHRQFQETSHSIQKLQEDVNALHSQLNHSECTGTYLQNGVSDSRTGDSMEASGFTKTGEQERTVGTVPSPGTPAAPCCGQLEERWQKLQNQMLAELDTCKESAHGVQSGVSAIEGRVFQLEQTCRRLDTISGSLQRIKEGLGKHVGSLWNCIRQMNGTLKSHSRDISGLKNSVQQFYSHVFQISTDLQDLVKFQPSATEEPSEATEGPSGKTPLESTRPSEEAPTEPPRLTPLPEDPAGPPQTGQQPVLPQRPLQPPPLPAWPGRTGLPFLPGSSGVIMETGEAGPPGRMGVSGRGLPRGVDGQMGQGPIHSSEGYAGAPGYPKSPPVTTPGVPLPTLVSFSAGLTQKPFPSDGGVVLFNKVLVNDGDVYNPNTGIFTAPYDGRYLITATLTPERDTYVEAVLSVSNASVAQLHTAGYRREFLEYHRPPGAVHTCGGPGAFHLIVHLKAGDGVNVVVTGGRLAHTDFDEMYSTFSGVFLYPFLSHL</sequence>
<evidence type="ECO:0000250" key="1"/>
<evidence type="ECO:0000255" key="2"/>
<evidence type="ECO:0000255" key="3">
    <source>
        <dbReference type="PROSITE-ProRule" id="PRU00368"/>
    </source>
</evidence>
<evidence type="ECO:0000255" key="4">
    <source>
        <dbReference type="PROSITE-ProRule" id="PRU00384"/>
    </source>
</evidence>
<evidence type="ECO:0000256" key="5">
    <source>
        <dbReference type="SAM" id="MobiDB-lite"/>
    </source>
</evidence>
<evidence type="ECO:0000269" key="6">
    <source>
    </source>
</evidence>
<evidence type="ECO:0007744" key="7">
    <source>
    </source>
</evidence>
<evidence type="ECO:0007744" key="8">
    <source>
    </source>
</evidence>
<dbReference type="EMBL" id="AF468645">
    <property type="protein sequence ID" value="AAM53532.1"/>
    <property type="molecule type" value="mRNA"/>
</dbReference>
<dbReference type="EMBL" id="BC053753">
    <property type="protein sequence ID" value="AAH53753.1"/>
    <property type="molecule type" value="mRNA"/>
</dbReference>
<dbReference type="CCDS" id="CCDS37686.1"/>
<dbReference type="RefSeq" id="NP_660140.1">
    <property type="nucleotide sequence ID" value="NM_145158.5"/>
</dbReference>
<dbReference type="SMR" id="Q8K482"/>
<dbReference type="ComplexPortal" id="CPX-438">
    <property type="entry name" value="EMILIN-2 complex"/>
</dbReference>
<dbReference type="FunCoup" id="Q8K482">
    <property type="interactions" value="194"/>
</dbReference>
<dbReference type="STRING" id="10090.ENSMUSP00000156446"/>
<dbReference type="GlyCosmos" id="Q8K482">
    <property type="glycosylation" value="7 sites, No reported glycans"/>
</dbReference>
<dbReference type="GlyGen" id="Q8K482">
    <property type="glycosylation" value="10 sites, 3 N-linked glycans (3 sites)"/>
</dbReference>
<dbReference type="iPTMnet" id="Q8K482"/>
<dbReference type="PhosphoSitePlus" id="Q8K482"/>
<dbReference type="jPOST" id="Q8K482"/>
<dbReference type="PaxDb" id="10090-ENSMUSP00000024849"/>
<dbReference type="ProteomicsDB" id="277860"/>
<dbReference type="Pumba" id="Q8K482"/>
<dbReference type="Antibodypedia" id="21912">
    <property type="antibodies" value="54 antibodies from 16 providers"/>
</dbReference>
<dbReference type="Ensembl" id="ENSMUST00000233057.2">
    <property type="protein sequence ID" value="ENSMUSP00000156446.2"/>
    <property type="gene ID" value="ENSMUSG00000024053.12"/>
</dbReference>
<dbReference type="GeneID" id="246707"/>
<dbReference type="KEGG" id="mmu:246707"/>
<dbReference type="UCSC" id="uc008dme.1">
    <property type="organism name" value="mouse"/>
</dbReference>
<dbReference type="AGR" id="MGI:2389136"/>
<dbReference type="CTD" id="84034"/>
<dbReference type="MGI" id="MGI:2389136">
    <property type="gene designation" value="Emilin2"/>
</dbReference>
<dbReference type="VEuPathDB" id="HostDB:ENSMUSG00000024053"/>
<dbReference type="eggNOG" id="ENOG502QV5P">
    <property type="taxonomic scope" value="Eukaryota"/>
</dbReference>
<dbReference type="GeneTree" id="ENSGT01030000234633"/>
<dbReference type="HOGENOM" id="CLU_011705_0_0_1"/>
<dbReference type="InParanoid" id="Q8K482"/>
<dbReference type="OMA" id="SAQPNCC"/>
<dbReference type="OrthoDB" id="9944757at2759"/>
<dbReference type="PhylomeDB" id="Q8K482"/>
<dbReference type="TreeFam" id="TF331033"/>
<dbReference type="Reactome" id="R-MMU-2129379">
    <property type="pathway name" value="Molecules associated with elastic fibres"/>
</dbReference>
<dbReference type="BioGRID-ORCS" id="246707">
    <property type="hits" value="3 hits in 79 CRISPR screens"/>
</dbReference>
<dbReference type="ChiTaRS" id="Emilin2">
    <property type="organism name" value="mouse"/>
</dbReference>
<dbReference type="PRO" id="PR:Q8K482"/>
<dbReference type="Proteomes" id="UP000000589">
    <property type="component" value="Chromosome 17"/>
</dbReference>
<dbReference type="RNAct" id="Q8K482">
    <property type="molecule type" value="protein"/>
</dbReference>
<dbReference type="Bgee" id="ENSMUSG00000024053">
    <property type="expression patterns" value="Expressed in decidua and 174 other cell types or tissues"/>
</dbReference>
<dbReference type="ExpressionAtlas" id="Q8K482">
    <property type="expression patterns" value="baseline and differential"/>
</dbReference>
<dbReference type="GO" id="GO:0005581">
    <property type="term" value="C:collagen trimer"/>
    <property type="evidence" value="ECO:0007669"/>
    <property type="project" value="UniProtKB-KW"/>
</dbReference>
<dbReference type="GO" id="GO:0062023">
    <property type="term" value="C:collagen-containing extracellular matrix"/>
    <property type="evidence" value="ECO:0007005"/>
    <property type="project" value="UniProtKB"/>
</dbReference>
<dbReference type="GO" id="GO:1990971">
    <property type="term" value="C:EMILIN complex"/>
    <property type="evidence" value="ECO:0000250"/>
    <property type="project" value="ComplexPortal"/>
</dbReference>
<dbReference type="GO" id="GO:0005576">
    <property type="term" value="C:extracellular region"/>
    <property type="evidence" value="ECO:0007669"/>
    <property type="project" value="UniProtKB-KW"/>
</dbReference>
<dbReference type="GO" id="GO:0033627">
    <property type="term" value="P:cell adhesion mediated by integrin"/>
    <property type="evidence" value="ECO:0000250"/>
    <property type="project" value="ComplexPortal"/>
</dbReference>
<dbReference type="GO" id="GO:0030336">
    <property type="term" value="P:negative regulation of cell migration"/>
    <property type="evidence" value="ECO:0000266"/>
    <property type="project" value="ComplexPortal"/>
</dbReference>
<dbReference type="GO" id="GO:0045766">
    <property type="term" value="P:positive regulation of angiogenesis"/>
    <property type="evidence" value="ECO:0000266"/>
    <property type="project" value="ComplexPortal"/>
</dbReference>
<dbReference type="GO" id="GO:0043065">
    <property type="term" value="P:positive regulation of apoptotic process"/>
    <property type="evidence" value="ECO:0000266"/>
    <property type="project" value="ComplexPortal"/>
</dbReference>
<dbReference type="GO" id="GO:0030194">
    <property type="term" value="P:positive regulation of blood coagulation"/>
    <property type="evidence" value="ECO:0000314"/>
    <property type="project" value="ComplexPortal"/>
</dbReference>
<dbReference type="GO" id="GO:1900426">
    <property type="term" value="P:positive regulation of defense response to bacterium"/>
    <property type="evidence" value="ECO:0000266"/>
    <property type="project" value="ComplexPortal"/>
</dbReference>
<dbReference type="GO" id="GO:1901731">
    <property type="term" value="P:positive regulation of platelet aggregation"/>
    <property type="evidence" value="ECO:0000266"/>
    <property type="project" value="ComplexPortal"/>
</dbReference>
<dbReference type="GO" id="GO:0008217">
    <property type="term" value="P:regulation of blood pressure"/>
    <property type="evidence" value="ECO:0000250"/>
    <property type="project" value="ComplexPortal"/>
</dbReference>
<dbReference type="GO" id="GO:0042127">
    <property type="term" value="P:regulation of cell population proliferation"/>
    <property type="evidence" value="ECO:0000250"/>
    <property type="project" value="ComplexPortal"/>
</dbReference>
<dbReference type="FunFam" id="2.60.120.40:FF:000011">
    <property type="entry name" value="Elastin microfibril interfacer 2"/>
    <property type="match status" value="1"/>
</dbReference>
<dbReference type="Gene3D" id="1.10.287.1490">
    <property type="match status" value="1"/>
</dbReference>
<dbReference type="Gene3D" id="2.60.120.40">
    <property type="match status" value="1"/>
</dbReference>
<dbReference type="InterPro" id="IPR001073">
    <property type="entry name" value="C1q_dom"/>
</dbReference>
<dbReference type="InterPro" id="IPR050392">
    <property type="entry name" value="Collagen/C1q_domain"/>
</dbReference>
<dbReference type="InterPro" id="IPR011489">
    <property type="entry name" value="EMI_domain"/>
</dbReference>
<dbReference type="InterPro" id="IPR008983">
    <property type="entry name" value="Tumour_necrosis_fac-like_dom"/>
</dbReference>
<dbReference type="PANTHER" id="PTHR15427">
    <property type="entry name" value="EMILIN ELASTIN MICROFIBRIL INTERFACE-LOCATED PROTEIN ELASTIN MICROFIBRIL INTERFACER"/>
    <property type="match status" value="1"/>
</dbReference>
<dbReference type="PANTHER" id="PTHR15427:SF5">
    <property type="entry name" value="EMILIN-2"/>
    <property type="match status" value="1"/>
</dbReference>
<dbReference type="Pfam" id="PF00386">
    <property type="entry name" value="C1q"/>
    <property type="match status" value="1"/>
</dbReference>
<dbReference type="Pfam" id="PF07546">
    <property type="entry name" value="EMI"/>
    <property type="match status" value="1"/>
</dbReference>
<dbReference type="SMART" id="SM00110">
    <property type="entry name" value="C1Q"/>
    <property type="match status" value="1"/>
</dbReference>
<dbReference type="SUPFAM" id="SSF49842">
    <property type="entry name" value="TNF-like"/>
    <property type="match status" value="1"/>
</dbReference>
<dbReference type="PROSITE" id="PS50871">
    <property type="entry name" value="C1Q"/>
    <property type="match status" value="1"/>
</dbReference>
<dbReference type="PROSITE" id="PS51041">
    <property type="entry name" value="EMI"/>
    <property type="match status" value="1"/>
</dbReference>
<reference key="1">
    <citation type="journal article" date="2003" name="Mol. Cell. Neurosci.">
        <title>An emilin family extracellular matrix protein identified in the cochlear basilar membrane.</title>
        <authorList>
            <person name="Amma L.L."/>
            <person name="Goodyear R."/>
            <person name="Faris J.S."/>
            <person name="Jones I."/>
            <person name="Ng L."/>
            <person name="Richardson G."/>
            <person name="Forrest D."/>
        </authorList>
    </citation>
    <scope>NUCLEOTIDE SEQUENCE [MRNA]</scope>
    <scope>CHARACTERIZATION</scope>
    <source>
        <strain>C57BL/6J</strain>
        <tissue>Cochlea</tissue>
    </source>
</reference>
<reference key="2">
    <citation type="journal article" date="2004" name="Genome Res.">
        <title>The status, quality, and expansion of the NIH full-length cDNA project: the Mammalian Gene Collection (MGC).</title>
        <authorList>
            <consortium name="The MGC Project Team"/>
        </authorList>
    </citation>
    <scope>NUCLEOTIDE SEQUENCE [LARGE SCALE MRNA]</scope>
    <source>
        <tissue>Limb</tissue>
    </source>
</reference>
<reference key="3">
    <citation type="journal article" date="2002" name="Dev. Biol.">
        <title>Developmental expression and biochemical characterization of Emu family members.</title>
        <authorList>
            <person name="Leimeister C."/>
            <person name="Steidl C."/>
            <person name="Schumacher N."/>
            <person name="Erhard S."/>
            <person name="Gessler M."/>
        </authorList>
    </citation>
    <scope>DEVELOPMENTAL STAGE</scope>
</reference>
<reference key="4">
    <citation type="journal article" date="2009" name="Immunity">
        <title>The phagosomal proteome in interferon-gamma-activated macrophages.</title>
        <authorList>
            <person name="Trost M."/>
            <person name="English L."/>
            <person name="Lemieux S."/>
            <person name="Courcelles M."/>
            <person name="Desjardins M."/>
            <person name="Thibault P."/>
        </authorList>
    </citation>
    <scope>PHOSPHORYLATION [LARGE SCALE ANALYSIS] AT SER-636</scope>
    <scope>IDENTIFICATION BY MASS SPECTROMETRY [LARGE SCALE ANALYSIS]</scope>
</reference>
<reference key="5">
    <citation type="journal article" date="2010" name="Cell">
        <title>A tissue-specific atlas of mouse protein phosphorylation and expression.</title>
        <authorList>
            <person name="Huttlin E.L."/>
            <person name="Jedrychowski M.P."/>
            <person name="Elias J.E."/>
            <person name="Goswami T."/>
            <person name="Rad R."/>
            <person name="Beausoleil S.A."/>
            <person name="Villen J."/>
            <person name="Haas W."/>
            <person name="Sowa M.E."/>
            <person name="Gygi S.P."/>
        </authorList>
    </citation>
    <scope>PHOSPHORYLATION [LARGE SCALE ANALYSIS] AT SER-636</scope>
    <scope>IDENTIFICATION BY MASS SPECTROMETRY [LARGE SCALE ANALYSIS]</scope>
    <source>
        <tissue>Brown adipose tissue</tissue>
    </source>
</reference>
<organism>
    <name type="scientific">Mus musculus</name>
    <name type="common">Mouse</name>
    <dbReference type="NCBI Taxonomy" id="10090"/>
    <lineage>
        <taxon>Eukaryota</taxon>
        <taxon>Metazoa</taxon>
        <taxon>Chordata</taxon>
        <taxon>Craniata</taxon>
        <taxon>Vertebrata</taxon>
        <taxon>Euteleostomi</taxon>
        <taxon>Mammalia</taxon>
        <taxon>Eutheria</taxon>
        <taxon>Euarchontoglires</taxon>
        <taxon>Glires</taxon>
        <taxon>Rodentia</taxon>
        <taxon>Myomorpha</taxon>
        <taxon>Muroidea</taxon>
        <taxon>Muridae</taxon>
        <taxon>Murinae</taxon>
        <taxon>Mus</taxon>
        <taxon>Mus</taxon>
    </lineage>
</organism>
<keyword id="KW-0130">Cell adhesion</keyword>
<keyword id="KW-0175">Coiled coil</keyword>
<keyword id="KW-0176">Collagen</keyword>
<keyword id="KW-1015">Disulfide bond</keyword>
<keyword id="KW-0272">Extracellular matrix</keyword>
<keyword id="KW-0325">Glycoprotein</keyword>
<keyword id="KW-0597">Phosphoprotein</keyword>
<keyword id="KW-1185">Reference proteome</keyword>
<keyword id="KW-0964">Secreted</keyword>
<keyword id="KW-0732">Signal</keyword>
<proteinExistence type="evidence at protein level"/>
<comment type="function">
    <text>May be responsible for anchoring smooth muscle cells to elastic fibers, and may be involved not only in the formation of the elastic fiber, but also in the processes that regulate vessel assembly. Has cell adhesive capacity. Major component of the cochlear basilar membrane (BM) which may contribute to the developmental assembly or function of the BM.</text>
</comment>
<comment type="subunit">
    <text evidence="1">Homotrimer associated through a moderately stable interaction of the C-terminal globular C1q domains, allowing the nucleation of the triple helix and then a further quaternary assembly to higher-order polymers via intermolecular disulfide bonds (By similarity). Interacts with EMILIN1.</text>
</comment>
<comment type="subcellular location">
    <subcellularLocation>
        <location>Secreted</location>
        <location>Extracellular space</location>
        <location>Extracellular matrix</location>
    </subcellularLocation>
    <text>Found mainly at the interface between amorphous elastin and microfibrils.</text>
</comment>
<comment type="tissue specificity">
    <text>Highest levels are present in cochlea of P8 pups, followed by modest levels in adult heart and lung, and much lower levels in forebrain, brainstem, cerebellum and hypothalamus. Very low levels detected in muscle, liver, kidney and eye.</text>
</comment>
<comment type="developmental stage">
    <text evidence="6">Low levels detected in cochlea in neonatal pups at P1. Levels increased 2-fold by P5 and rose further to 16-fold at P13. Expression declined somewhat in adult mice. At 9.5 dpc, as during all stages of development, it is strongly expressed in the neural fold, the limbbuds and the heart.</text>
</comment>
<protein>
    <recommendedName>
        <fullName>EMILIN-2</fullName>
    </recommendedName>
    <alternativeName>
        <fullName>Basilin</fullName>
    </alternativeName>
    <alternativeName>
        <fullName>Elastin microfibril interface-located protein 2</fullName>
        <shortName>Elastin microfibril interfacer 2</shortName>
    </alternativeName>
</protein>
<feature type="signal peptide" evidence="2">
    <location>
        <begin position="1"/>
        <end position="33"/>
    </location>
</feature>
<feature type="chain" id="PRO_0000007818" description="EMILIN-2">
    <location>
        <begin position="34"/>
        <end position="1074"/>
    </location>
</feature>
<feature type="domain" description="EMI" evidence="4">
    <location>
        <begin position="47"/>
        <end position="123"/>
    </location>
</feature>
<feature type="domain" description="Collagen-like">
    <location>
        <begin position="852"/>
        <end position="913"/>
    </location>
</feature>
<feature type="domain" description="C1q" evidence="3">
    <location>
        <begin position="922"/>
        <end position="1073"/>
    </location>
</feature>
<feature type="region of interest" description="Disordered" evidence="5">
    <location>
        <begin position="121"/>
        <end position="184"/>
    </location>
</feature>
<feature type="region of interest" description="Disordered" evidence="5">
    <location>
        <begin position="219"/>
        <end position="264"/>
    </location>
</feature>
<feature type="region of interest" description="Disordered" evidence="5">
    <location>
        <begin position="627"/>
        <end position="661"/>
    </location>
</feature>
<feature type="region of interest" description="Disordered" evidence="5">
    <location>
        <begin position="783"/>
        <end position="865"/>
    </location>
</feature>
<feature type="region of interest" description="Disordered" evidence="5">
    <location>
        <begin position="893"/>
        <end position="917"/>
    </location>
</feature>
<feature type="coiled-coil region" evidence="2">
    <location>
        <begin position="181"/>
        <end position="218"/>
    </location>
</feature>
<feature type="coiled-coil region" evidence="2">
    <location>
        <begin position="259"/>
        <end position="345"/>
    </location>
</feature>
<feature type="coiled-coil region" evidence="2">
    <location>
        <begin position="374"/>
        <end position="394"/>
    </location>
</feature>
<feature type="coiled-coil region" evidence="2">
    <location>
        <begin position="533"/>
        <end position="554"/>
    </location>
</feature>
<feature type="coiled-coil region" evidence="2">
    <location>
        <begin position="582"/>
        <end position="620"/>
    </location>
</feature>
<feature type="compositionally biased region" description="Polar residues" evidence="5">
    <location>
        <begin position="149"/>
        <end position="165"/>
    </location>
</feature>
<feature type="compositionally biased region" description="Basic and acidic residues" evidence="5">
    <location>
        <begin position="219"/>
        <end position="228"/>
    </location>
</feature>
<feature type="compositionally biased region" description="Pro residues" evidence="5">
    <location>
        <begin position="813"/>
        <end position="828"/>
    </location>
</feature>
<feature type="modified residue" description="Phosphoserine" evidence="7 8">
    <location>
        <position position="636"/>
    </location>
</feature>
<feature type="glycosylation site" description="N-linked (GlcNAc...) asparagine" evidence="2">
    <location>
        <position position="58"/>
    </location>
</feature>
<feature type="glycosylation site" description="N-linked (GlcNAc...) asparagine" evidence="2">
    <location>
        <position position="463"/>
    </location>
</feature>
<feature type="glycosylation site" description="N-linked (GlcNAc...) asparagine" evidence="2">
    <location>
        <position position="514"/>
    </location>
</feature>
<feature type="glycosylation site" description="N-linked (GlcNAc...) asparagine" evidence="2">
    <location>
        <position position="586"/>
    </location>
</feature>
<feature type="glycosylation site" description="N-linked (GlcNAc...) asparagine" evidence="2">
    <location>
        <position position="615"/>
    </location>
</feature>
<feature type="glycosylation site" description="N-linked (GlcNAc...) asparagine" evidence="2">
    <location>
        <position position="744"/>
    </location>
</feature>
<feature type="glycosylation site" description="N-linked (GlcNAc...) asparagine" evidence="2">
    <location>
        <position position="995"/>
    </location>
</feature>
<feature type="disulfide bond" evidence="4">
    <location>
        <begin position="51"/>
        <end position="113"/>
    </location>
</feature>
<feature type="disulfide bond" evidence="4">
    <location>
        <begin position="77"/>
        <end position="84"/>
    </location>
</feature>
<feature type="disulfide bond" evidence="4">
    <location>
        <begin position="112"/>
        <end position="121"/>
    </location>
</feature>
<gene>
    <name type="primary">Emilin2</name>
</gene>
<accession>Q8K482</accession>